<name>PSAA_HELAN</name>
<keyword id="KW-0004">4Fe-4S</keyword>
<keyword id="KW-0148">Chlorophyll</keyword>
<keyword id="KW-0150">Chloroplast</keyword>
<keyword id="KW-0157">Chromophore</keyword>
<keyword id="KW-0249">Electron transport</keyword>
<keyword id="KW-0408">Iron</keyword>
<keyword id="KW-0411">Iron-sulfur</keyword>
<keyword id="KW-0460">Magnesium</keyword>
<keyword id="KW-0472">Membrane</keyword>
<keyword id="KW-0479">Metal-binding</keyword>
<keyword id="KW-0560">Oxidoreductase</keyword>
<keyword id="KW-0602">Photosynthesis</keyword>
<keyword id="KW-0603">Photosystem I</keyword>
<keyword id="KW-0934">Plastid</keyword>
<keyword id="KW-0793">Thylakoid</keyword>
<keyword id="KW-0812">Transmembrane</keyword>
<keyword id="KW-1133">Transmembrane helix</keyword>
<keyword id="KW-0813">Transport</keyword>
<comment type="function">
    <text>PsaA and PsaB bind P700, the primary electron donor of photosystem I (PSI), as well as the electron acceptors A0, A1 and FX. PSI is a plastocyanin-ferredoxin oxidoreductase, converting photonic excitation into a charge separation, which transfers an electron from the donor P700 chlorophyll pair to the spectroscopically characterized acceptors A0, A1, FX, FA and FB in turn. Oxidized P700 is reduced on the lumenal side of the thylakoid membrane by plastocyanin.</text>
</comment>
<comment type="catalytic activity">
    <reaction evidence="1">
        <text>reduced [plastocyanin] + hnu + oxidized [2Fe-2S]-[ferredoxin] = oxidized [plastocyanin] + reduced [2Fe-2S]-[ferredoxin]</text>
        <dbReference type="Rhea" id="RHEA:30407"/>
        <dbReference type="Rhea" id="RHEA-COMP:10000"/>
        <dbReference type="Rhea" id="RHEA-COMP:10001"/>
        <dbReference type="Rhea" id="RHEA-COMP:10039"/>
        <dbReference type="Rhea" id="RHEA-COMP:10040"/>
        <dbReference type="ChEBI" id="CHEBI:29036"/>
        <dbReference type="ChEBI" id="CHEBI:30212"/>
        <dbReference type="ChEBI" id="CHEBI:33737"/>
        <dbReference type="ChEBI" id="CHEBI:33738"/>
        <dbReference type="ChEBI" id="CHEBI:49552"/>
        <dbReference type="EC" id="1.97.1.12"/>
    </reaction>
</comment>
<comment type="cofactor">
    <text evidence="1">P700 is a chlorophyll a/chlorophyll a' dimer, A0 is one or more chlorophyll a, A1 is one or both phylloquinones and FX is a shared 4Fe-4S iron-sulfur center.</text>
</comment>
<comment type="subunit">
    <text evidence="1">The PsaA/B heterodimer binds the P700 chlorophyll special pair and subsequent electron acceptors. PSI consists of a core antenna complex that captures photons, and an electron transfer chain that converts photonic excitation into a charge separation. The eukaryotic PSI reaction center is composed of at least 11 subunits.</text>
</comment>
<comment type="subcellular location">
    <subcellularLocation>
        <location evidence="1">Plastid</location>
        <location evidence="1">Chloroplast thylakoid membrane</location>
        <topology evidence="1">Multi-pass membrane protein</topology>
    </subcellularLocation>
</comment>
<comment type="similarity">
    <text evidence="1">Belongs to the PsaA/PsaB family.</text>
</comment>
<accession>Q1KXV9</accession>
<protein>
    <recommendedName>
        <fullName evidence="1">Photosystem I P700 chlorophyll a apoprotein A1</fullName>
        <ecNumber evidence="1">1.97.1.12</ecNumber>
    </recommendedName>
    <alternativeName>
        <fullName evidence="1">PSI-A</fullName>
    </alternativeName>
    <alternativeName>
        <fullName evidence="1">PsaA</fullName>
    </alternativeName>
</protein>
<reference key="1">
    <citation type="submission" date="2006-01" db="EMBL/GenBank/DDBJ databases">
        <title>A comparison of the first two published chloroplast genomes in Asteraceae: Lactuca and Helianthus.</title>
        <authorList>
            <person name="Timme R.E."/>
            <person name="Kuehl J.V."/>
            <person name="Boore J.L."/>
            <person name="Jansen R.K."/>
        </authorList>
    </citation>
    <scope>NUCLEOTIDE SEQUENCE [LARGE SCALE GENOMIC DNA]</scope>
    <source>
        <strain>cv. HA383</strain>
    </source>
</reference>
<feature type="chain" id="PRO_0000275947" description="Photosystem I P700 chlorophyll a apoprotein A1">
    <location>
        <begin position="1"/>
        <end position="750"/>
    </location>
</feature>
<feature type="transmembrane region" description="Helical; Name=I" evidence="1">
    <location>
        <begin position="70"/>
        <end position="93"/>
    </location>
</feature>
<feature type="transmembrane region" description="Helical; Name=II" evidence="1">
    <location>
        <begin position="156"/>
        <end position="179"/>
    </location>
</feature>
<feature type="transmembrane region" description="Helical; Name=III" evidence="1">
    <location>
        <begin position="195"/>
        <end position="219"/>
    </location>
</feature>
<feature type="transmembrane region" description="Helical; Name=IV" evidence="1">
    <location>
        <begin position="291"/>
        <end position="309"/>
    </location>
</feature>
<feature type="transmembrane region" description="Helical; Name=V" evidence="1">
    <location>
        <begin position="346"/>
        <end position="369"/>
    </location>
</feature>
<feature type="transmembrane region" description="Helical; Name=VI" evidence="1">
    <location>
        <begin position="385"/>
        <end position="411"/>
    </location>
</feature>
<feature type="transmembrane region" description="Helical; Name=VII" evidence="1">
    <location>
        <begin position="433"/>
        <end position="455"/>
    </location>
</feature>
<feature type="transmembrane region" description="Helical; Name=VIII" evidence="1">
    <location>
        <begin position="531"/>
        <end position="549"/>
    </location>
</feature>
<feature type="transmembrane region" description="Helical; Name=IX" evidence="1">
    <location>
        <begin position="589"/>
        <end position="610"/>
    </location>
</feature>
<feature type="transmembrane region" description="Helical; Name=X" evidence="1">
    <location>
        <begin position="664"/>
        <end position="686"/>
    </location>
</feature>
<feature type="transmembrane region" description="Helical; Name=XI" evidence="1">
    <location>
        <begin position="724"/>
        <end position="744"/>
    </location>
</feature>
<feature type="binding site" evidence="1">
    <location>
        <position position="573"/>
    </location>
    <ligand>
        <name>[4Fe-4S] cluster</name>
        <dbReference type="ChEBI" id="CHEBI:49883"/>
        <note>ligand shared between dimeric partners</note>
    </ligand>
</feature>
<feature type="binding site" evidence="1">
    <location>
        <position position="582"/>
    </location>
    <ligand>
        <name>[4Fe-4S] cluster</name>
        <dbReference type="ChEBI" id="CHEBI:49883"/>
        <note>ligand shared between dimeric partners</note>
    </ligand>
</feature>
<feature type="binding site" description="axial binding residue" evidence="1">
    <location>
        <position position="675"/>
    </location>
    <ligand>
        <name>chlorophyll a'</name>
        <dbReference type="ChEBI" id="CHEBI:189419"/>
        <label>A1</label>
    </ligand>
    <ligandPart>
        <name>Mg</name>
        <dbReference type="ChEBI" id="CHEBI:25107"/>
    </ligandPart>
</feature>
<feature type="binding site" description="axial binding residue" evidence="1">
    <location>
        <position position="683"/>
    </location>
    <ligand>
        <name>chlorophyll a</name>
        <dbReference type="ChEBI" id="CHEBI:58416"/>
        <label>A3</label>
    </ligand>
    <ligandPart>
        <name>Mg</name>
        <dbReference type="ChEBI" id="CHEBI:25107"/>
    </ligandPart>
</feature>
<feature type="binding site" evidence="1">
    <location>
        <position position="691"/>
    </location>
    <ligand>
        <name>chlorophyll a</name>
        <dbReference type="ChEBI" id="CHEBI:58416"/>
        <label>A3</label>
    </ligand>
</feature>
<feature type="binding site" evidence="1">
    <location>
        <position position="692"/>
    </location>
    <ligand>
        <name>phylloquinone</name>
        <dbReference type="ChEBI" id="CHEBI:18067"/>
        <label>A</label>
    </ligand>
</feature>
<gene>
    <name evidence="1" type="primary">psaA</name>
</gene>
<dbReference type="EC" id="1.97.1.12" evidence="1"/>
<dbReference type="EMBL" id="DQ383815">
    <property type="protein sequence ID" value="ABD47146.1"/>
    <property type="molecule type" value="Genomic_DNA"/>
</dbReference>
<dbReference type="RefSeq" id="YP_588117.1">
    <property type="nucleotide sequence ID" value="NC_007977.1"/>
</dbReference>
<dbReference type="SMR" id="Q1KXV9"/>
<dbReference type="GeneID" id="4055592"/>
<dbReference type="KEGG" id="han:4055592"/>
<dbReference type="OrthoDB" id="349at2759"/>
<dbReference type="PhylomeDB" id="Q1KXV9"/>
<dbReference type="GO" id="GO:0009535">
    <property type="term" value="C:chloroplast thylakoid membrane"/>
    <property type="evidence" value="ECO:0007669"/>
    <property type="project" value="UniProtKB-SubCell"/>
</dbReference>
<dbReference type="GO" id="GO:0009522">
    <property type="term" value="C:photosystem I"/>
    <property type="evidence" value="ECO:0007669"/>
    <property type="project" value="UniProtKB-KW"/>
</dbReference>
<dbReference type="GO" id="GO:0051539">
    <property type="term" value="F:4 iron, 4 sulfur cluster binding"/>
    <property type="evidence" value="ECO:0007669"/>
    <property type="project" value="UniProtKB-KW"/>
</dbReference>
<dbReference type="GO" id="GO:0016168">
    <property type="term" value="F:chlorophyll binding"/>
    <property type="evidence" value="ECO:0007669"/>
    <property type="project" value="UniProtKB-KW"/>
</dbReference>
<dbReference type="GO" id="GO:0009055">
    <property type="term" value="F:electron transfer activity"/>
    <property type="evidence" value="ECO:0007669"/>
    <property type="project" value="UniProtKB-UniRule"/>
</dbReference>
<dbReference type="GO" id="GO:0000287">
    <property type="term" value="F:magnesium ion binding"/>
    <property type="evidence" value="ECO:0007669"/>
    <property type="project" value="UniProtKB-UniRule"/>
</dbReference>
<dbReference type="GO" id="GO:0016491">
    <property type="term" value="F:oxidoreductase activity"/>
    <property type="evidence" value="ECO:0007669"/>
    <property type="project" value="UniProtKB-KW"/>
</dbReference>
<dbReference type="GO" id="GO:0015979">
    <property type="term" value="P:photosynthesis"/>
    <property type="evidence" value="ECO:0007669"/>
    <property type="project" value="UniProtKB-UniRule"/>
</dbReference>
<dbReference type="FunFam" id="1.20.1130.10:FF:000001">
    <property type="entry name" value="Photosystem I P700 chlorophyll a apoprotein A2"/>
    <property type="match status" value="1"/>
</dbReference>
<dbReference type="Gene3D" id="1.20.1130.10">
    <property type="entry name" value="Photosystem I PsaA/PsaB"/>
    <property type="match status" value="1"/>
</dbReference>
<dbReference type="HAMAP" id="MF_00458">
    <property type="entry name" value="PSI_PsaA"/>
    <property type="match status" value="1"/>
</dbReference>
<dbReference type="InterPro" id="IPR006243">
    <property type="entry name" value="PSI_PsaA"/>
</dbReference>
<dbReference type="InterPro" id="IPR001280">
    <property type="entry name" value="PSI_PsaA/B"/>
</dbReference>
<dbReference type="InterPro" id="IPR020586">
    <property type="entry name" value="PSI_PsaA/B_CS"/>
</dbReference>
<dbReference type="InterPro" id="IPR036408">
    <property type="entry name" value="PSI_PsaA/B_sf"/>
</dbReference>
<dbReference type="NCBIfam" id="TIGR01335">
    <property type="entry name" value="psaA"/>
    <property type="match status" value="1"/>
</dbReference>
<dbReference type="PANTHER" id="PTHR30128">
    <property type="entry name" value="OUTER MEMBRANE PROTEIN, OMPA-RELATED"/>
    <property type="match status" value="1"/>
</dbReference>
<dbReference type="PANTHER" id="PTHR30128:SF19">
    <property type="entry name" value="PHOTOSYSTEM I P700 CHLOROPHYLL A APOPROTEIN A1-RELATED"/>
    <property type="match status" value="1"/>
</dbReference>
<dbReference type="Pfam" id="PF00223">
    <property type="entry name" value="PsaA_PsaB"/>
    <property type="match status" value="1"/>
</dbReference>
<dbReference type="PIRSF" id="PIRSF002905">
    <property type="entry name" value="PSI_A"/>
    <property type="match status" value="1"/>
</dbReference>
<dbReference type="PRINTS" id="PR00257">
    <property type="entry name" value="PHOTSYSPSAAB"/>
</dbReference>
<dbReference type="SUPFAM" id="SSF81558">
    <property type="entry name" value="Photosystem I subunits PsaA/PsaB"/>
    <property type="match status" value="1"/>
</dbReference>
<dbReference type="PROSITE" id="PS00419">
    <property type="entry name" value="PHOTOSYSTEM_I_PSAAB"/>
    <property type="match status" value="1"/>
</dbReference>
<proteinExistence type="inferred from homology"/>
<geneLocation type="chloroplast"/>
<sequence length="750" mass="83102">MIIRSPEPEVKILVDRDHIKTSFEEWARPGHFSRTIAKGPETTTWIWNLHADAHDFDSHTSDLEEISRKVFSAHFGQLSIIFLWLSGMYFHGARFSNYEAWLSDPTHIGPSAQVVWPIVGQEILNGDVGGGFRGIQITSGFFQLWRASGITSELQLYCTAIGALIFAALMLFAGWFHYHKAAPKLAWFQDVESMLNHHLAGLLGLGSLSWAGHQVHVSLPINQFLNAGVDPKEIPLPHEFILNRDLLAQLYPSFAEGATPFFTLNWSKYADFLTFRGGLDPVTGGLWLTDTAHHHLAIAILFLIAGHMYRTNWGIGHGLKDILEAHKGPFTGQGHKGLYEILTTSWHAQLSLNLAMLGSLTIVVAHHMYAMPPYPYLATDYGTQLSLFTHHMWIGGFLIVGAAAHAAIFMVRDYDPTTRYNDLLDRVLRHRDAIISHLNWACIFLGFHSFGLYIHNDTMSALGRPQDMFSDTAIQLQPVFAQWIQNTHALAPGATAPGATASTSLTWGGGDLVAVGGKVALLPIPLGTADFLVHHIHAFTIHVTVLILLKGVLFARSSRLIPDKANLGFRFPCDGPGRGGTCQVSAWDHVFLGLFWMYNSISVVIFHFSWKMQSDVWGSISDQGVVTHITGGNFAQSSITINGWLRDFLWAQASQVIQSYGSSLSAYGLFFLGAHFVWAFSLMFLFSGRGYWQELIESIVWAHNKLKVAPATQPRALSIVQGRAVGVTHYLLGGIATTWAFFLARIIAVG</sequence>
<organism>
    <name type="scientific">Helianthus annuus</name>
    <name type="common">Common sunflower</name>
    <dbReference type="NCBI Taxonomy" id="4232"/>
    <lineage>
        <taxon>Eukaryota</taxon>
        <taxon>Viridiplantae</taxon>
        <taxon>Streptophyta</taxon>
        <taxon>Embryophyta</taxon>
        <taxon>Tracheophyta</taxon>
        <taxon>Spermatophyta</taxon>
        <taxon>Magnoliopsida</taxon>
        <taxon>eudicotyledons</taxon>
        <taxon>Gunneridae</taxon>
        <taxon>Pentapetalae</taxon>
        <taxon>asterids</taxon>
        <taxon>campanulids</taxon>
        <taxon>Asterales</taxon>
        <taxon>Asteraceae</taxon>
        <taxon>Asteroideae</taxon>
        <taxon>Heliantheae alliance</taxon>
        <taxon>Heliantheae</taxon>
        <taxon>Helianthus</taxon>
    </lineage>
</organism>
<evidence type="ECO:0000255" key="1">
    <source>
        <dbReference type="HAMAP-Rule" id="MF_00458"/>
    </source>
</evidence>